<proteinExistence type="inferred from homology"/>
<reference key="1">
    <citation type="submission" date="2007-06" db="EMBL/GenBank/DDBJ databases">
        <authorList>
            <person name="Brinkac L.M."/>
            <person name="Daugherty S."/>
            <person name="Dodson R.J."/>
            <person name="Madupu R."/>
            <person name="Brown J.L."/>
            <person name="Bruce D."/>
            <person name="Detter C."/>
            <person name="Munk C."/>
            <person name="Smith L.A."/>
            <person name="Smith T.J."/>
            <person name="White O."/>
            <person name="Brettin T.S."/>
        </authorList>
    </citation>
    <scope>NUCLEOTIDE SEQUENCE [LARGE SCALE GENOMIC DNA]</scope>
    <source>
        <strain>Langeland / NCTC 10281 / Type F</strain>
    </source>
</reference>
<feature type="chain" id="PRO_0000329130" description="Small, acid-soluble spore protein H 1">
    <location>
        <begin position="1"/>
        <end position="65"/>
    </location>
</feature>
<comment type="subcellular location">
    <subcellularLocation>
        <location evidence="1">Spore core</location>
    </subcellularLocation>
</comment>
<comment type="similarity">
    <text evidence="1">Belongs to the SspH family.</text>
</comment>
<keyword id="KW-0749">Sporulation</keyword>
<protein>
    <recommendedName>
        <fullName evidence="1">Small, acid-soluble spore protein H 1</fullName>
        <shortName evidence="1">SASP H 1</shortName>
    </recommendedName>
</protein>
<gene>
    <name evidence="1" type="primary">sspH1</name>
    <name type="ordered locus">CLI_0875</name>
</gene>
<dbReference type="EMBL" id="CP000728">
    <property type="protein sequence ID" value="ABS41659.1"/>
    <property type="molecule type" value="Genomic_DNA"/>
</dbReference>
<dbReference type="RefSeq" id="WP_003403913.1">
    <property type="nucleotide sequence ID" value="NC_009699.1"/>
</dbReference>
<dbReference type="SMR" id="A7GBI7"/>
<dbReference type="KEGG" id="cbf:CLI_0875"/>
<dbReference type="HOGENOM" id="CLU_2895957_0_0_9"/>
<dbReference type="Proteomes" id="UP000002410">
    <property type="component" value="Chromosome"/>
</dbReference>
<dbReference type="GO" id="GO:0042601">
    <property type="term" value="C:endospore-forming forespore"/>
    <property type="evidence" value="ECO:0007669"/>
    <property type="project" value="InterPro"/>
</dbReference>
<dbReference type="GO" id="GO:0030436">
    <property type="term" value="P:asexual sporulation"/>
    <property type="evidence" value="ECO:0007669"/>
    <property type="project" value="UniProtKB-UniRule"/>
</dbReference>
<dbReference type="GO" id="GO:0030435">
    <property type="term" value="P:sporulation resulting in formation of a cellular spore"/>
    <property type="evidence" value="ECO:0007669"/>
    <property type="project" value="UniProtKB-KW"/>
</dbReference>
<dbReference type="HAMAP" id="MF_00667">
    <property type="entry name" value="SspH"/>
    <property type="match status" value="1"/>
</dbReference>
<dbReference type="InterPro" id="IPR012610">
    <property type="entry name" value="SASP_SspH"/>
</dbReference>
<dbReference type="NCBIfam" id="TIGR02861">
    <property type="entry name" value="SASP_H"/>
    <property type="match status" value="1"/>
</dbReference>
<dbReference type="Pfam" id="PF08141">
    <property type="entry name" value="SspH"/>
    <property type="match status" value="1"/>
</dbReference>
<organism>
    <name type="scientific">Clostridium botulinum (strain Langeland / NCTC 10281 / Type F)</name>
    <dbReference type="NCBI Taxonomy" id="441772"/>
    <lineage>
        <taxon>Bacteria</taxon>
        <taxon>Bacillati</taxon>
        <taxon>Bacillota</taxon>
        <taxon>Clostridia</taxon>
        <taxon>Eubacteriales</taxon>
        <taxon>Clostridiaceae</taxon>
        <taxon>Clostridium</taxon>
    </lineage>
</organism>
<accession>A7GBI7</accession>
<sequence length="65" mass="6947">MDASRASQLINSKASYVYCKGKPVIIKSVDESSKMATVQSVDNGATMIAPLNDIRESGVINNQNS</sequence>
<evidence type="ECO:0000255" key="1">
    <source>
        <dbReference type="HAMAP-Rule" id="MF_00667"/>
    </source>
</evidence>
<name>SSPH1_CLOBL</name>